<dbReference type="EC" id="3.1.1.31" evidence="1"/>
<dbReference type="EMBL" id="CP001164">
    <property type="protein sequence ID" value="ACI36252.1"/>
    <property type="molecule type" value="Genomic_DNA"/>
</dbReference>
<dbReference type="RefSeq" id="WP_000815433.1">
    <property type="nucleotide sequence ID" value="NC_011353.1"/>
</dbReference>
<dbReference type="SMR" id="B5YRG5"/>
<dbReference type="KEGG" id="ecf:ECH74115_0870"/>
<dbReference type="HOGENOM" id="CLU_038716_2_0_6"/>
<dbReference type="UniPathway" id="UPA00115">
    <property type="reaction ID" value="UER00409"/>
</dbReference>
<dbReference type="GO" id="GO:0005829">
    <property type="term" value="C:cytosol"/>
    <property type="evidence" value="ECO:0007669"/>
    <property type="project" value="TreeGrafter"/>
</dbReference>
<dbReference type="GO" id="GO:0017057">
    <property type="term" value="F:6-phosphogluconolactonase activity"/>
    <property type="evidence" value="ECO:0007669"/>
    <property type="project" value="UniProtKB-UniRule"/>
</dbReference>
<dbReference type="GO" id="GO:0006006">
    <property type="term" value="P:glucose metabolic process"/>
    <property type="evidence" value="ECO:0007669"/>
    <property type="project" value="UniProtKB-KW"/>
</dbReference>
<dbReference type="GO" id="GO:0009051">
    <property type="term" value="P:pentose-phosphate shunt, oxidative branch"/>
    <property type="evidence" value="ECO:0007669"/>
    <property type="project" value="UniProtKB-UniRule"/>
</dbReference>
<dbReference type="FunFam" id="2.130.10.10:FF:000051">
    <property type="entry name" value="6-phosphogluconolactonase"/>
    <property type="match status" value="1"/>
</dbReference>
<dbReference type="Gene3D" id="2.130.10.10">
    <property type="entry name" value="YVTN repeat-like/Quinoprotein amine dehydrogenase"/>
    <property type="match status" value="1"/>
</dbReference>
<dbReference type="HAMAP" id="MF_01605">
    <property type="entry name" value="6P_gluconolactonase"/>
    <property type="match status" value="1"/>
</dbReference>
<dbReference type="InterPro" id="IPR022528">
    <property type="entry name" value="6-phosphogluconolactonase_YbhE"/>
</dbReference>
<dbReference type="InterPro" id="IPR050282">
    <property type="entry name" value="Cycloisomerase_2"/>
</dbReference>
<dbReference type="InterPro" id="IPR019405">
    <property type="entry name" value="Lactonase_7-beta_prop"/>
</dbReference>
<dbReference type="InterPro" id="IPR011045">
    <property type="entry name" value="N2O_reductase_N"/>
</dbReference>
<dbReference type="InterPro" id="IPR015943">
    <property type="entry name" value="WD40/YVTN_repeat-like_dom_sf"/>
</dbReference>
<dbReference type="NCBIfam" id="NF008258">
    <property type="entry name" value="PRK11028.1"/>
    <property type="match status" value="1"/>
</dbReference>
<dbReference type="PANTHER" id="PTHR30344:SF1">
    <property type="entry name" value="6-PHOSPHOGLUCONOLACTONASE"/>
    <property type="match status" value="1"/>
</dbReference>
<dbReference type="PANTHER" id="PTHR30344">
    <property type="entry name" value="6-PHOSPHOGLUCONOLACTONASE-RELATED"/>
    <property type="match status" value="1"/>
</dbReference>
<dbReference type="Pfam" id="PF10282">
    <property type="entry name" value="Lactonase"/>
    <property type="match status" value="1"/>
</dbReference>
<dbReference type="SUPFAM" id="SSF50974">
    <property type="entry name" value="Nitrous oxide reductase, N-terminal domain"/>
    <property type="match status" value="1"/>
</dbReference>
<gene>
    <name evidence="1" type="primary">pgl</name>
    <name type="ordered locus">ECH74115_0870</name>
</gene>
<feature type="chain" id="PRO_1000148151" description="6-phosphogluconolactonase">
    <location>
        <begin position="1"/>
        <end position="331"/>
    </location>
</feature>
<feature type="modified residue" description="N6-acetyllysine" evidence="1">
    <location>
        <position position="287"/>
    </location>
</feature>
<name>6PGL_ECO5E</name>
<reference key="1">
    <citation type="journal article" date="2011" name="Proc. Natl. Acad. Sci. U.S.A.">
        <title>Genomic anatomy of Escherichia coli O157:H7 outbreaks.</title>
        <authorList>
            <person name="Eppinger M."/>
            <person name="Mammel M.K."/>
            <person name="Leclerc J.E."/>
            <person name="Ravel J."/>
            <person name="Cebula T.A."/>
        </authorList>
    </citation>
    <scope>NUCLEOTIDE SEQUENCE [LARGE SCALE GENOMIC DNA]</scope>
    <source>
        <strain>EC4115 / EHEC</strain>
    </source>
</reference>
<evidence type="ECO:0000255" key="1">
    <source>
        <dbReference type="HAMAP-Rule" id="MF_01605"/>
    </source>
</evidence>
<keyword id="KW-0007">Acetylation</keyword>
<keyword id="KW-0119">Carbohydrate metabolism</keyword>
<keyword id="KW-0313">Glucose metabolism</keyword>
<keyword id="KW-0378">Hydrolase</keyword>
<organism>
    <name type="scientific">Escherichia coli O157:H7 (strain EC4115 / EHEC)</name>
    <dbReference type="NCBI Taxonomy" id="444450"/>
    <lineage>
        <taxon>Bacteria</taxon>
        <taxon>Pseudomonadati</taxon>
        <taxon>Pseudomonadota</taxon>
        <taxon>Gammaproteobacteria</taxon>
        <taxon>Enterobacterales</taxon>
        <taxon>Enterobacteriaceae</taxon>
        <taxon>Escherichia</taxon>
    </lineage>
</organism>
<sequence>MKQTVYIASPESQQIHVWNLNHEGALTLTQVVDVPGQVQPMVVSPDKRYLYVGVRPEFRVLAYRIAPDDGALTFAAESALPGSPTHISTDHQGQFVFVGSYNAGNVSVTRLEDGLPVGVVDVVEGLDGCHSANISPDNRTLWVPALKQDRICLFTVSDDGHLVAQDPAEVTTVEGAGPRHMVFHPNEQYAYCVNELNSSVDVWELKDPHGNIECVQTLDMMPENFSDTRWAADIHITPDGRHLYACDRTASLITVFSVSEDGSVLSKEGFQPTETQPRGFNIDHRGKYLIAAGQKSHHISVYEIVGEQGLLHEKGRYAVGQGPMWVVVNAH</sequence>
<comment type="function">
    <text evidence="1">Catalyzes the hydrolysis of 6-phosphogluconolactone to 6-phosphogluconate.</text>
</comment>
<comment type="catalytic activity">
    <reaction evidence="1">
        <text>6-phospho-D-glucono-1,5-lactone + H2O = 6-phospho-D-gluconate + H(+)</text>
        <dbReference type="Rhea" id="RHEA:12556"/>
        <dbReference type="ChEBI" id="CHEBI:15377"/>
        <dbReference type="ChEBI" id="CHEBI:15378"/>
        <dbReference type="ChEBI" id="CHEBI:57955"/>
        <dbReference type="ChEBI" id="CHEBI:58759"/>
        <dbReference type="EC" id="3.1.1.31"/>
    </reaction>
</comment>
<comment type="pathway">
    <text evidence="1">Carbohydrate degradation; pentose phosphate pathway; D-ribulose 5-phosphate from D-glucose 6-phosphate (oxidative stage): step 2/3.</text>
</comment>
<comment type="similarity">
    <text evidence="1">Belongs to the cycloisomerase 2 family.</text>
</comment>
<protein>
    <recommendedName>
        <fullName evidence="1">6-phosphogluconolactonase</fullName>
        <shortName evidence="1">6-P-gluconolactonase</shortName>
        <ecNumber evidence="1">3.1.1.31</ecNumber>
    </recommendedName>
</protein>
<proteinExistence type="inferred from homology"/>
<accession>B5YRG5</accession>